<keyword id="KW-1185">Reference proteome</keyword>
<gene>
    <name type="ordered locus">APE_1276</name>
</gene>
<feature type="chain" id="PRO_0000216223" description="Uncharacterized protein APE_1276">
    <location>
        <begin position="1"/>
        <end position="371"/>
    </location>
</feature>
<name>Y1276_AERPE</name>
<accession>P56816</accession>
<organism>
    <name type="scientific">Aeropyrum pernix (strain ATCC 700893 / DSM 11879 / JCM 9820 / NBRC 100138 / K1)</name>
    <dbReference type="NCBI Taxonomy" id="272557"/>
    <lineage>
        <taxon>Archaea</taxon>
        <taxon>Thermoproteota</taxon>
        <taxon>Thermoprotei</taxon>
        <taxon>Desulfurococcales</taxon>
        <taxon>Desulfurococcaceae</taxon>
        <taxon>Aeropyrum</taxon>
    </lineage>
</organism>
<dbReference type="EMBL" id="BA000002">
    <property type="protein sequence ID" value="BAA80267.1"/>
    <property type="molecule type" value="Genomic_DNA"/>
</dbReference>
<dbReference type="PIR" id="E72601">
    <property type="entry name" value="E72601"/>
</dbReference>
<dbReference type="RefSeq" id="WP_010866274.1">
    <property type="nucleotide sequence ID" value="NC_000854.2"/>
</dbReference>
<dbReference type="STRING" id="272557.APE_1276"/>
<dbReference type="EnsemblBacteria" id="BAA80267">
    <property type="protein sequence ID" value="BAA80267"/>
    <property type="gene ID" value="APE_1276"/>
</dbReference>
<dbReference type="GeneID" id="1445911"/>
<dbReference type="KEGG" id="ape:APE_1276"/>
<dbReference type="PATRIC" id="fig|272557.25.peg.876"/>
<dbReference type="eggNOG" id="arCOG04197">
    <property type="taxonomic scope" value="Archaea"/>
</dbReference>
<dbReference type="Proteomes" id="UP000002518">
    <property type="component" value="Chromosome"/>
</dbReference>
<sequence length="371" mass="43639">MSYITLTLPFNVGGSVAGDLFSTAWLFKTATHRMLSLAKQTPILPATDIGWKNTFRKAIYEVIPNRRYVDGVITLVRGIYESCRQLGVGFKEVELGDWLMFQQAEKEYPVRNITLKDDYSFYITTIGYNGEKDRIVVKPTIPKNYKVLLDKILEERQKHTARIVIKDYGVRKNRLWVHGEIQLTIPIDFYYKHMTRYRRNYGKLYGGVDVNVDRANLAVVDRYGRLRHVKTFWFEEASRKGCRSRRARSIIGMTVHDMLKYAYHHGVKTLFLENPDVLGKLKLLWIRNGKRLHRNYNWRVSVFRSRIIEMITMKTPLYAIRVEYVDPRRTTHSEEHDKIMKRYGLDRHSTSAYLIALRGIERYSSIQKVTA</sequence>
<protein>
    <recommendedName>
        <fullName>Uncharacterized protein APE_1276</fullName>
    </recommendedName>
</protein>
<proteinExistence type="predicted"/>
<reference key="1">
    <citation type="journal article" date="1999" name="DNA Res.">
        <title>Complete genome sequence of an aerobic hyper-thermophilic crenarchaeon, Aeropyrum pernix K1.</title>
        <authorList>
            <person name="Kawarabayasi Y."/>
            <person name="Hino Y."/>
            <person name="Horikawa H."/>
            <person name="Yamazaki S."/>
            <person name="Haikawa Y."/>
            <person name="Jin-no K."/>
            <person name="Takahashi M."/>
            <person name="Sekine M."/>
            <person name="Baba S."/>
            <person name="Ankai A."/>
            <person name="Kosugi H."/>
            <person name="Hosoyama A."/>
            <person name="Fukui S."/>
            <person name="Nagai Y."/>
            <person name="Nishijima K."/>
            <person name="Nakazawa H."/>
            <person name="Takamiya M."/>
            <person name="Masuda S."/>
            <person name="Funahashi T."/>
            <person name="Tanaka T."/>
            <person name="Kudoh Y."/>
            <person name="Yamazaki J."/>
            <person name="Kushida N."/>
            <person name="Oguchi A."/>
            <person name="Aoki K."/>
            <person name="Kubota K."/>
            <person name="Nakamura Y."/>
            <person name="Nomura N."/>
            <person name="Sako Y."/>
            <person name="Kikuchi H."/>
        </authorList>
    </citation>
    <scope>NUCLEOTIDE SEQUENCE [LARGE SCALE GENOMIC DNA]</scope>
    <source>
        <strain>ATCC 700893 / DSM 11879 / JCM 9820 / NBRC 100138 / K1</strain>
    </source>
</reference>
<evidence type="ECO:0000305" key="1"/>
<comment type="similarity">
    <text evidence="1">To A.pernix APE_1804 and S.solfataricus SSO2105.</text>
</comment>